<protein>
    <recommendedName>
        <fullName evidence="1">Large ribosomal subunit protein uL2</fullName>
    </recommendedName>
    <alternativeName>
        <fullName evidence="3">50S ribosomal protein L2</fullName>
    </alternativeName>
</protein>
<feature type="chain" id="PRO_1000165779" description="Large ribosomal subunit protein uL2">
    <location>
        <begin position="1"/>
        <end position="274"/>
    </location>
</feature>
<feature type="region of interest" description="Disordered" evidence="2">
    <location>
        <begin position="223"/>
        <end position="274"/>
    </location>
</feature>
<accession>C3LRQ5</accession>
<evidence type="ECO:0000255" key="1">
    <source>
        <dbReference type="HAMAP-Rule" id="MF_01320"/>
    </source>
</evidence>
<evidence type="ECO:0000256" key="2">
    <source>
        <dbReference type="SAM" id="MobiDB-lite"/>
    </source>
</evidence>
<evidence type="ECO:0000305" key="3"/>
<name>RL2_VIBCM</name>
<proteinExistence type="inferred from homology"/>
<sequence>MAIVKCKPTSAGRRHVVKVVNADLHKGKPYAPLLEKNSKNGGRNNNGRITVRHIGGGHKQHYRLVDFKRTKDGIPAKVERLEYDPNRSANIALVLYADGERRYIIAPKGLQAGDVIQSGPDAPIKAGNAMPMRNIPVGSTIHNVELTPGKGAQLARSAGAYAQLVARDGAYVTLRLRSGEMRKVLSEGRATIGEVGNAEHMLRELGKAGAARWRGVRPTVRGVVMNPVDHPHGGGEGRTSGGRHPVSPWGVPTKGYKTRSNKRTDKYIVRRRNK</sequence>
<reference key="1">
    <citation type="journal article" date="2008" name="PLoS ONE">
        <title>A recalibrated molecular clock and independent origins for the cholera pandemic clones.</title>
        <authorList>
            <person name="Feng L."/>
            <person name="Reeves P.R."/>
            <person name="Lan R."/>
            <person name="Ren Y."/>
            <person name="Gao C."/>
            <person name="Zhou Z."/>
            <person name="Ren Y."/>
            <person name="Cheng J."/>
            <person name="Wang W."/>
            <person name="Wang J."/>
            <person name="Qian W."/>
            <person name="Li D."/>
            <person name="Wang L."/>
        </authorList>
    </citation>
    <scope>NUCLEOTIDE SEQUENCE [LARGE SCALE GENOMIC DNA]</scope>
    <source>
        <strain>M66-2</strain>
    </source>
</reference>
<keyword id="KW-0687">Ribonucleoprotein</keyword>
<keyword id="KW-0689">Ribosomal protein</keyword>
<keyword id="KW-0694">RNA-binding</keyword>
<keyword id="KW-0699">rRNA-binding</keyword>
<comment type="function">
    <text evidence="1">One of the primary rRNA binding proteins. Required for association of the 30S and 50S subunits to form the 70S ribosome, for tRNA binding and peptide bond formation. It has been suggested to have peptidyltransferase activity; this is somewhat controversial. Makes several contacts with the 16S rRNA in the 70S ribosome.</text>
</comment>
<comment type="subunit">
    <text evidence="1">Part of the 50S ribosomal subunit. Forms a bridge to the 30S subunit in the 70S ribosome.</text>
</comment>
<comment type="similarity">
    <text evidence="1">Belongs to the universal ribosomal protein uL2 family.</text>
</comment>
<gene>
    <name evidence="1" type="primary">rplB</name>
    <name type="ordered locus">VCM66_2513</name>
</gene>
<dbReference type="EMBL" id="CP001233">
    <property type="protein sequence ID" value="ACP06810.1"/>
    <property type="molecule type" value="Genomic_DNA"/>
</dbReference>
<dbReference type="RefSeq" id="WP_001018908.1">
    <property type="nucleotide sequence ID" value="NC_012578.1"/>
</dbReference>
<dbReference type="SMR" id="C3LRQ5"/>
<dbReference type="GeneID" id="89513430"/>
<dbReference type="KEGG" id="vcm:VCM66_2513"/>
<dbReference type="HOGENOM" id="CLU_036235_2_1_6"/>
<dbReference type="Proteomes" id="UP000001217">
    <property type="component" value="Chromosome I"/>
</dbReference>
<dbReference type="GO" id="GO:0015934">
    <property type="term" value="C:large ribosomal subunit"/>
    <property type="evidence" value="ECO:0007669"/>
    <property type="project" value="InterPro"/>
</dbReference>
<dbReference type="GO" id="GO:0019843">
    <property type="term" value="F:rRNA binding"/>
    <property type="evidence" value="ECO:0007669"/>
    <property type="project" value="UniProtKB-UniRule"/>
</dbReference>
<dbReference type="GO" id="GO:0003735">
    <property type="term" value="F:structural constituent of ribosome"/>
    <property type="evidence" value="ECO:0007669"/>
    <property type="project" value="InterPro"/>
</dbReference>
<dbReference type="GO" id="GO:0016740">
    <property type="term" value="F:transferase activity"/>
    <property type="evidence" value="ECO:0007669"/>
    <property type="project" value="InterPro"/>
</dbReference>
<dbReference type="GO" id="GO:0002181">
    <property type="term" value="P:cytoplasmic translation"/>
    <property type="evidence" value="ECO:0007669"/>
    <property type="project" value="TreeGrafter"/>
</dbReference>
<dbReference type="FunFam" id="2.30.30.30:FF:000001">
    <property type="entry name" value="50S ribosomal protein L2"/>
    <property type="match status" value="1"/>
</dbReference>
<dbReference type="FunFam" id="2.40.50.140:FF:000003">
    <property type="entry name" value="50S ribosomal protein L2"/>
    <property type="match status" value="1"/>
</dbReference>
<dbReference type="FunFam" id="4.10.950.10:FF:000001">
    <property type="entry name" value="50S ribosomal protein L2"/>
    <property type="match status" value="1"/>
</dbReference>
<dbReference type="Gene3D" id="2.30.30.30">
    <property type="match status" value="1"/>
</dbReference>
<dbReference type="Gene3D" id="2.40.50.140">
    <property type="entry name" value="Nucleic acid-binding proteins"/>
    <property type="match status" value="1"/>
</dbReference>
<dbReference type="Gene3D" id="4.10.950.10">
    <property type="entry name" value="Ribosomal protein L2, domain 3"/>
    <property type="match status" value="1"/>
</dbReference>
<dbReference type="HAMAP" id="MF_01320_B">
    <property type="entry name" value="Ribosomal_uL2_B"/>
    <property type="match status" value="1"/>
</dbReference>
<dbReference type="InterPro" id="IPR012340">
    <property type="entry name" value="NA-bd_OB-fold"/>
</dbReference>
<dbReference type="InterPro" id="IPR014722">
    <property type="entry name" value="Rib_uL2_dom2"/>
</dbReference>
<dbReference type="InterPro" id="IPR002171">
    <property type="entry name" value="Ribosomal_uL2"/>
</dbReference>
<dbReference type="InterPro" id="IPR005880">
    <property type="entry name" value="Ribosomal_uL2_bac/org-type"/>
</dbReference>
<dbReference type="InterPro" id="IPR022669">
    <property type="entry name" value="Ribosomal_uL2_C"/>
</dbReference>
<dbReference type="InterPro" id="IPR022671">
    <property type="entry name" value="Ribosomal_uL2_CS"/>
</dbReference>
<dbReference type="InterPro" id="IPR014726">
    <property type="entry name" value="Ribosomal_uL2_dom3"/>
</dbReference>
<dbReference type="InterPro" id="IPR022666">
    <property type="entry name" value="Ribosomal_uL2_RNA-bd_dom"/>
</dbReference>
<dbReference type="InterPro" id="IPR008991">
    <property type="entry name" value="Translation_prot_SH3-like_sf"/>
</dbReference>
<dbReference type="NCBIfam" id="TIGR01171">
    <property type="entry name" value="rplB_bact"/>
    <property type="match status" value="1"/>
</dbReference>
<dbReference type="PANTHER" id="PTHR13691:SF5">
    <property type="entry name" value="LARGE RIBOSOMAL SUBUNIT PROTEIN UL2M"/>
    <property type="match status" value="1"/>
</dbReference>
<dbReference type="PANTHER" id="PTHR13691">
    <property type="entry name" value="RIBOSOMAL PROTEIN L2"/>
    <property type="match status" value="1"/>
</dbReference>
<dbReference type="Pfam" id="PF00181">
    <property type="entry name" value="Ribosomal_L2"/>
    <property type="match status" value="1"/>
</dbReference>
<dbReference type="Pfam" id="PF03947">
    <property type="entry name" value="Ribosomal_L2_C"/>
    <property type="match status" value="1"/>
</dbReference>
<dbReference type="PIRSF" id="PIRSF002158">
    <property type="entry name" value="Ribosomal_L2"/>
    <property type="match status" value="1"/>
</dbReference>
<dbReference type="SMART" id="SM01383">
    <property type="entry name" value="Ribosomal_L2"/>
    <property type="match status" value="1"/>
</dbReference>
<dbReference type="SMART" id="SM01382">
    <property type="entry name" value="Ribosomal_L2_C"/>
    <property type="match status" value="1"/>
</dbReference>
<dbReference type="SUPFAM" id="SSF50249">
    <property type="entry name" value="Nucleic acid-binding proteins"/>
    <property type="match status" value="1"/>
</dbReference>
<dbReference type="SUPFAM" id="SSF50104">
    <property type="entry name" value="Translation proteins SH3-like domain"/>
    <property type="match status" value="1"/>
</dbReference>
<dbReference type="PROSITE" id="PS00467">
    <property type="entry name" value="RIBOSOMAL_L2"/>
    <property type="match status" value="1"/>
</dbReference>
<organism>
    <name type="scientific">Vibrio cholerae serotype O1 (strain M66-2)</name>
    <dbReference type="NCBI Taxonomy" id="579112"/>
    <lineage>
        <taxon>Bacteria</taxon>
        <taxon>Pseudomonadati</taxon>
        <taxon>Pseudomonadota</taxon>
        <taxon>Gammaproteobacteria</taxon>
        <taxon>Vibrionales</taxon>
        <taxon>Vibrionaceae</taxon>
        <taxon>Vibrio</taxon>
    </lineage>
</organism>